<feature type="chain" id="PRO_0000365942" description="Ragulator complex protein LAMTOR2-A">
    <location>
        <begin position="1"/>
        <end position="125"/>
    </location>
</feature>
<feature type="region of interest" description="Required for location at endosomes" evidence="1">
    <location>
        <begin position="57"/>
        <end position="70"/>
    </location>
</feature>
<comment type="function">
    <text evidence="3">As part of the Ragulator complex it is involved in amino acid sensing and activation of mTORC1, a signaling complex promoting cell growth in response to growth factors, energy levels, and amino acids. Activated by amino acids through a mechanism involving the lysosomal V-ATPase, the Ragulator plays a dual role for the small GTPases Rag (RagA/RRAGA, RagB/RRAGB, RagC/RRAGC and/or RagD/RRAGD): it (1) acts as a guanine nucleotide exchange factor (GEF), activating the small GTPases Rag and (2) mediates recruitment of Rag GTPases to the lysosome membrane. Activated Ragulator and Rag GTPases function as a scaffold recruiting mTORC1 to lysosomes where it is in turn activated.</text>
</comment>
<comment type="subunit">
    <text evidence="3">Part of the Ragulator complex composed of lamtor1, lamtor2, lamtor3, lamtor4 and lamtor5. The Ragulator complex interacts with slc38a9; the probable amino acid sensor. Component of the lysosomal folliculin complex (LFC).</text>
</comment>
<comment type="subcellular location">
    <subcellularLocation>
        <location evidence="2">Late endosome membrane</location>
        <topology evidence="2">Peripheral membrane protein</topology>
        <orientation evidence="2">Cytoplasmic side</orientation>
    </subcellularLocation>
    <subcellularLocation>
        <location evidence="2">Lysosome membrane</location>
        <topology evidence="2">Peripheral membrane protein</topology>
        <orientation evidence="2">Cytoplasmic side</orientation>
    </subcellularLocation>
    <text evidence="2">Recruited to lysosome and endosome membranes by LAMTOR1.</text>
</comment>
<comment type="similarity">
    <text evidence="4">Belongs to the GAMAD family.</text>
</comment>
<sequence>MLRPKALTQVLSQANTGGVQSTLLLNNEGSLLAYSGYGDTDARVTAAIASNIWAAYDKNGHQAFNEDNLKLILMDCMEGRVAITRVSNLLLCMYAKETVGFGMLKAKAQALVYYLEEPLNQVSSA</sequence>
<keyword id="KW-0967">Endosome</keyword>
<keyword id="KW-0458">Lysosome</keyword>
<keyword id="KW-0472">Membrane</keyword>
<keyword id="KW-1185">Reference proteome</keyword>
<accession>Q63ZJ2</accession>
<dbReference type="EMBL" id="BC082921">
    <property type="protein sequence ID" value="AAH82921.1"/>
    <property type="molecule type" value="mRNA"/>
</dbReference>
<dbReference type="SMR" id="Q63ZJ2"/>
<dbReference type="DNASU" id="494825"/>
<dbReference type="GeneID" id="494825"/>
<dbReference type="KEGG" id="xla:494825"/>
<dbReference type="AGR" id="Xenbase:XB-GENE-992367"/>
<dbReference type="CTD" id="494825"/>
<dbReference type="Xenbase" id="XB-GENE-992367">
    <property type="gene designation" value="lamtor2.L"/>
</dbReference>
<dbReference type="OMA" id="HCDDGIV"/>
<dbReference type="OrthoDB" id="271745at2759"/>
<dbReference type="Proteomes" id="UP000186698">
    <property type="component" value="Chromosome 8L"/>
</dbReference>
<dbReference type="Bgee" id="494825">
    <property type="expression patterns" value="Expressed in liver and 20 other cell types or tissues"/>
</dbReference>
<dbReference type="GO" id="GO:0005770">
    <property type="term" value="C:late endosome"/>
    <property type="evidence" value="ECO:0000250"/>
    <property type="project" value="UniProtKB"/>
</dbReference>
<dbReference type="GO" id="GO:0031902">
    <property type="term" value="C:late endosome membrane"/>
    <property type="evidence" value="ECO:0007669"/>
    <property type="project" value="UniProtKB-SubCell"/>
</dbReference>
<dbReference type="GO" id="GO:0005765">
    <property type="term" value="C:lysosomal membrane"/>
    <property type="evidence" value="ECO:0000250"/>
    <property type="project" value="UniProtKB"/>
</dbReference>
<dbReference type="GO" id="GO:0071986">
    <property type="term" value="C:Ragulator complex"/>
    <property type="evidence" value="ECO:0000250"/>
    <property type="project" value="UniProtKB"/>
</dbReference>
<dbReference type="GO" id="GO:0005085">
    <property type="term" value="F:guanyl-nucleotide exchange factor activity"/>
    <property type="evidence" value="ECO:0007669"/>
    <property type="project" value="InterPro"/>
</dbReference>
<dbReference type="GO" id="GO:0060090">
    <property type="term" value="F:molecular adaptor activity"/>
    <property type="evidence" value="ECO:0007669"/>
    <property type="project" value="InterPro"/>
</dbReference>
<dbReference type="GO" id="GO:0071230">
    <property type="term" value="P:cellular response to amino acid stimulus"/>
    <property type="evidence" value="ECO:0000250"/>
    <property type="project" value="UniProtKB"/>
</dbReference>
<dbReference type="GO" id="GO:0032008">
    <property type="term" value="P:positive regulation of TOR signaling"/>
    <property type="evidence" value="ECO:0000250"/>
    <property type="project" value="UniProtKB"/>
</dbReference>
<dbReference type="GO" id="GO:1904263">
    <property type="term" value="P:positive regulation of TORC1 signaling"/>
    <property type="evidence" value="ECO:0000250"/>
    <property type="project" value="UniProtKB"/>
</dbReference>
<dbReference type="GO" id="GO:0008104">
    <property type="term" value="P:protein localization"/>
    <property type="evidence" value="ECO:0000250"/>
    <property type="project" value="UniProtKB"/>
</dbReference>
<dbReference type="GO" id="GO:0001558">
    <property type="term" value="P:regulation of cell growth"/>
    <property type="evidence" value="ECO:0000250"/>
    <property type="project" value="UniProtKB"/>
</dbReference>
<dbReference type="FunFam" id="3.30.450.30:FF:000004">
    <property type="entry name" value="ragulator complex protein LAMTOR2"/>
    <property type="match status" value="1"/>
</dbReference>
<dbReference type="Gene3D" id="3.30.450.30">
    <property type="entry name" value="Dynein light chain 2a, cytoplasmic"/>
    <property type="match status" value="1"/>
</dbReference>
<dbReference type="InterPro" id="IPR037587">
    <property type="entry name" value="LAMTOR2-like"/>
</dbReference>
<dbReference type="InterPro" id="IPR004942">
    <property type="entry name" value="Roadblock/LAMTOR2_dom"/>
</dbReference>
<dbReference type="PANTHER" id="PTHR13323">
    <property type="entry name" value="LATE ENDOSOMAL/LYSOSOMAL MP1 INTERACTING PROTEIN"/>
    <property type="match status" value="1"/>
</dbReference>
<dbReference type="Pfam" id="PF03259">
    <property type="entry name" value="Robl_LC7"/>
    <property type="match status" value="1"/>
</dbReference>
<dbReference type="SMART" id="SM00960">
    <property type="entry name" value="Robl_LC7"/>
    <property type="match status" value="1"/>
</dbReference>
<dbReference type="SUPFAM" id="SSF103196">
    <property type="entry name" value="Roadblock/LC7 domain"/>
    <property type="match status" value="1"/>
</dbReference>
<reference key="1">
    <citation type="submission" date="2004-09" db="EMBL/GenBank/DDBJ databases">
        <authorList>
            <consortium name="NIH - Xenopus Gene Collection (XGC) project"/>
        </authorList>
    </citation>
    <scope>NUCLEOTIDE SEQUENCE [LARGE SCALE MRNA]</scope>
</reference>
<protein>
    <recommendedName>
        <fullName>Ragulator complex protein LAMTOR2-A</fullName>
    </recommendedName>
    <alternativeName>
        <fullName>Late endosomal/lysosomal adaptor and MAPK and MTOR activator 2-A</fullName>
    </alternativeName>
    <alternativeName>
        <fullName>Roadblock domain-containing protein 3</fullName>
    </alternativeName>
</protein>
<organism>
    <name type="scientific">Xenopus laevis</name>
    <name type="common">African clawed frog</name>
    <dbReference type="NCBI Taxonomy" id="8355"/>
    <lineage>
        <taxon>Eukaryota</taxon>
        <taxon>Metazoa</taxon>
        <taxon>Chordata</taxon>
        <taxon>Craniata</taxon>
        <taxon>Vertebrata</taxon>
        <taxon>Euteleostomi</taxon>
        <taxon>Amphibia</taxon>
        <taxon>Batrachia</taxon>
        <taxon>Anura</taxon>
        <taxon>Pipoidea</taxon>
        <taxon>Pipidae</taxon>
        <taxon>Xenopodinae</taxon>
        <taxon>Xenopus</taxon>
        <taxon>Xenopus</taxon>
    </lineage>
</organism>
<proteinExistence type="evidence at transcript level"/>
<evidence type="ECO:0000250" key="1"/>
<evidence type="ECO:0000250" key="2">
    <source>
        <dbReference type="UniProtKB" id="Q9JHS3"/>
    </source>
</evidence>
<evidence type="ECO:0000250" key="3">
    <source>
        <dbReference type="UniProtKB" id="Q9Y2Q5"/>
    </source>
</evidence>
<evidence type="ECO:0000305" key="4"/>
<gene>
    <name type="primary">lamtor2-a</name>
    <name type="synonym">robld3</name>
</gene>
<name>LTR2A_XENLA</name>